<sequence length="403" mass="43664">MKEHIAVDRNTYDQVMLPIYSPAQFIPVRGQGSRVWDQHGKEYIDFAGGIAVVALGHCHPTLVDVLKQQGEKLWHISNIFTNEPALILAQKLIDATFAERVFFANSGAEANEAAFKLARHYAIARHNPYKTKIIAFHQGFHGRTLFTVSVGGQPKYADGFGPKPADIIHVPFNDLDAVKAVIDDHTCAVVLEPVQGEGGVTAAAPAFIHGVRELCDKHQVLLVFDEVQSGMGRTGKLFSYMHYDVTPDIITTAKALGNGFPISAMLTTVNIASVMTPGAHGTTYGGNPLACAVANVAFDIINTPAVLAGVEKRHNLMVNFLNDINQKYSIFGEIRGKGLLIGAELKAPHQGKAKDILQLAAENGLMLLSAGGDVLRFTPSLIISEEEIAQGMERLEQVINQLV</sequence>
<keyword id="KW-0028">Amino-acid biosynthesis</keyword>
<keyword id="KW-0032">Aminotransferase</keyword>
<keyword id="KW-0055">Arginine biosynthesis</keyword>
<keyword id="KW-0963">Cytoplasm</keyword>
<keyword id="KW-0457">Lysine biosynthesis</keyword>
<keyword id="KW-0663">Pyridoxal phosphate</keyword>
<keyword id="KW-1185">Reference proteome</keyword>
<keyword id="KW-0808">Transferase</keyword>
<proteinExistence type="inferred from homology"/>
<protein>
    <recommendedName>
        <fullName evidence="1">Acetylornithine/succinyldiaminopimelate aminotransferase</fullName>
        <shortName evidence="1">ACOAT</shortName>
        <shortName evidence="1">DapATase</shortName>
        <shortName evidence="1">Succinyldiaminopimelate transferase</shortName>
        <ecNumber evidence="1">2.6.1.11</ecNumber>
        <ecNumber evidence="1">2.6.1.17</ecNumber>
    </recommendedName>
</protein>
<name>ARGD_PHOLL</name>
<comment type="function">
    <text evidence="1">Involved in both the arginine and lysine biosynthetic pathways.</text>
</comment>
<comment type="catalytic activity">
    <reaction evidence="1">
        <text>N(2)-acetyl-L-ornithine + 2-oxoglutarate = N-acetyl-L-glutamate 5-semialdehyde + L-glutamate</text>
        <dbReference type="Rhea" id="RHEA:18049"/>
        <dbReference type="ChEBI" id="CHEBI:16810"/>
        <dbReference type="ChEBI" id="CHEBI:29123"/>
        <dbReference type="ChEBI" id="CHEBI:29985"/>
        <dbReference type="ChEBI" id="CHEBI:57805"/>
        <dbReference type="EC" id="2.6.1.11"/>
    </reaction>
</comment>
<comment type="catalytic activity">
    <reaction evidence="1">
        <text>N-succinyl-(2S,6S)-2,6-diaminopimelate + 2-oxoglutarate = (S)-2-succinylamino-6-oxoheptanedioate + L-glutamate</text>
        <dbReference type="Rhea" id="RHEA:11960"/>
        <dbReference type="ChEBI" id="CHEBI:15685"/>
        <dbReference type="ChEBI" id="CHEBI:16810"/>
        <dbReference type="ChEBI" id="CHEBI:29985"/>
        <dbReference type="ChEBI" id="CHEBI:58087"/>
        <dbReference type="EC" id="2.6.1.17"/>
    </reaction>
</comment>
<comment type="cofactor">
    <cofactor evidence="1">
        <name>pyridoxal 5'-phosphate</name>
        <dbReference type="ChEBI" id="CHEBI:597326"/>
    </cofactor>
    <text evidence="1">Binds 1 pyridoxal phosphate per subunit.</text>
</comment>
<comment type="pathway">
    <text evidence="1">Amino-acid biosynthesis; L-arginine biosynthesis; N(2)-acetyl-L-ornithine from L-glutamate: step 4/4.</text>
</comment>
<comment type="pathway">
    <text evidence="1">Amino-acid biosynthesis; L-lysine biosynthesis via DAP pathway; LL-2,6-diaminopimelate from (S)-tetrahydrodipicolinate (succinylase route): step 2/3.</text>
</comment>
<comment type="subunit">
    <text evidence="1">Homodimer.</text>
</comment>
<comment type="subcellular location">
    <subcellularLocation>
        <location evidence="1">Cytoplasm</location>
    </subcellularLocation>
</comment>
<comment type="similarity">
    <text evidence="1">Belongs to the class-III pyridoxal-phosphate-dependent aminotransferase family. ArgD subfamily.</text>
</comment>
<organism>
    <name type="scientific">Photorhabdus laumondii subsp. laumondii (strain DSM 15139 / CIP 105565 / TT01)</name>
    <name type="common">Photorhabdus luminescens subsp. laumondii</name>
    <dbReference type="NCBI Taxonomy" id="243265"/>
    <lineage>
        <taxon>Bacteria</taxon>
        <taxon>Pseudomonadati</taxon>
        <taxon>Pseudomonadota</taxon>
        <taxon>Gammaproteobacteria</taxon>
        <taxon>Enterobacterales</taxon>
        <taxon>Morganellaceae</taxon>
        <taxon>Photorhabdus</taxon>
    </lineage>
</organism>
<evidence type="ECO:0000255" key="1">
    <source>
        <dbReference type="HAMAP-Rule" id="MF_01107"/>
    </source>
</evidence>
<gene>
    <name evidence="1" type="primary">argD</name>
    <name evidence="1" type="synonym">dapC</name>
    <name type="ordered locus">plu0394</name>
</gene>
<accession>Q7N9E5</accession>
<reference key="1">
    <citation type="journal article" date="2003" name="Nat. Biotechnol.">
        <title>The genome sequence of the entomopathogenic bacterium Photorhabdus luminescens.</title>
        <authorList>
            <person name="Duchaud E."/>
            <person name="Rusniok C."/>
            <person name="Frangeul L."/>
            <person name="Buchrieser C."/>
            <person name="Givaudan A."/>
            <person name="Taourit S."/>
            <person name="Bocs S."/>
            <person name="Boursaux-Eude C."/>
            <person name="Chandler M."/>
            <person name="Charles J.-F."/>
            <person name="Dassa E."/>
            <person name="Derose R."/>
            <person name="Derzelle S."/>
            <person name="Freyssinet G."/>
            <person name="Gaudriault S."/>
            <person name="Medigue C."/>
            <person name="Lanois A."/>
            <person name="Powell K."/>
            <person name="Siguier P."/>
            <person name="Vincent R."/>
            <person name="Wingate V."/>
            <person name="Zouine M."/>
            <person name="Glaser P."/>
            <person name="Boemare N."/>
            <person name="Danchin A."/>
            <person name="Kunst F."/>
        </authorList>
    </citation>
    <scope>NUCLEOTIDE SEQUENCE [LARGE SCALE GENOMIC DNA]</scope>
    <source>
        <strain>DSM 15139 / CIP 105565 / TT01</strain>
    </source>
</reference>
<feature type="chain" id="PRO_0000112764" description="Acetylornithine/succinyldiaminopimelate aminotransferase">
    <location>
        <begin position="1"/>
        <end position="403"/>
    </location>
</feature>
<feature type="binding site" evidence="1">
    <location>
        <begin position="107"/>
        <end position="108"/>
    </location>
    <ligand>
        <name>pyridoxal 5'-phosphate</name>
        <dbReference type="ChEBI" id="CHEBI:597326"/>
    </ligand>
</feature>
<feature type="binding site" evidence="1">
    <location>
        <position position="140"/>
    </location>
    <ligand>
        <name>pyridoxal 5'-phosphate</name>
        <dbReference type="ChEBI" id="CHEBI:597326"/>
    </ligand>
</feature>
<feature type="binding site" evidence="1">
    <location>
        <position position="143"/>
    </location>
    <ligand>
        <name>N(2)-acetyl-L-ornithine</name>
        <dbReference type="ChEBI" id="CHEBI:57805"/>
    </ligand>
</feature>
<feature type="binding site" evidence="1">
    <location>
        <begin position="225"/>
        <end position="228"/>
    </location>
    <ligand>
        <name>pyridoxal 5'-phosphate</name>
        <dbReference type="ChEBI" id="CHEBI:597326"/>
    </ligand>
</feature>
<feature type="binding site" evidence="1">
    <location>
        <position position="282"/>
    </location>
    <ligand>
        <name>N(2)-acetyl-L-ornithine</name>
        <dbReference type="ChEBI" id="CHEBI:57805"/>
    </ligand>
</feature>
<feature type="binding site" evidence="1">
    <location>
        <position position="283"/>
    </location>
    <ligand>
        <name>pyridoxal 5'-phosphate</name>
        <dbReference type="ChEBI" id="CHEBI:597326"/>
    </ligand>
</feature>
<feature type="modified residue" description="N6-(pyridoxal phosphate)lysine" evidence="1">
    <location>
        <position position="254"/>
    </location>
</feature>
<dbReference type="EC" id="2.6.1.11" evidence="1"/>
<dbReference type="EC" id="2.6.1.17" evidence="1"/>
<dbReference type="EMBL" id="BX571860">
    <property type="protein sequence ID" value="CAE12689.1"/>
    <property type="molecule type" value="Genomic_DNA"/>
</dbReference>
<dbReference type="RefSeq" id="WP_011144781.1">
    <property type="nucleotide sequence ID" value="NC_005126.1"/>
</dbReference>
<dbReference type="SMR" id="Q7N9E5"/>
<dbReference type="STRING" id="243265.plu0394"/>
<dbReference type="GeneID" id="48846679"/>
<dbReference type="KEGG" id="plu:plu0394"/>
<dbReference type="eggNOG" id="COG4992">
    <property type="taxonomic scope" value="Bacteria"/>
</dbReference>
<dbReference type="HOGENOM" id="CLU_016922_10_1_6"/>
<dbReference type="OrthoDB" id="9801052at2"/>
<dbReference type="UniPathway" id="UPA00034">
    <property type="reaction ID" value="UER00020"/>
</dbReference>
<dbReference type="UniPathway" id="UPA00068">
    <property type="reaction ID" value="UER00109"/>
</dbReference>
<dbReference type="Proteomes" id="UP000002514">
    <property type="component" value="Chromosome"/>
</dbReference>
<dbReference type="GO" id="GO:0005737">
    <property type="term" value="C:cytoplasm"/>
    <property type="evidence" value="ECO:0007669"/>
    <property type="project" value="UniProtKB-SubCell"/>
</dbReference>
<dbReference type="GO" id="GO:0042802">
    <property type="term" value="F:identical protein binding"/>
    <property type="evidence" value="ECO:0007669"/>
    <property type="project" value="TreeGrafter"/>
</dbReference>
<dbReference type="GO" id="GO:0003992">
    <property type="term" value="F:N2-acetyl-L-ornithine:2-oxoglutarate 5-aminotransferase activity"/>
    <property type="evidence" value="ECO:0007669"/>
    <property type="project" value="UniProtKB-UniRule"/>
</dbReference>
<dbReference type="GO" id="GO:0030170">
    <property type="term" value="F:pyridoxal phosphate binding"/>
    <property type="evidence" value="ECO:0007669"/>
    <property type="project" value="InterPro"/>
</dbReference>
<dbReference type="GO" id="GO:0009016">
    <property type="term" value="F:succinyldiaminopimelate transaminase activity"/>
    <property type="evidence" value="ECO:0007669"/>
    <property type="project" value="UniProtKB-UniRule"/>
</dbReference>
<dbReference type="GO" id="GO:0006526">
    <property type="term" value="P:L-arginine biosynthetic process"/>
    <property type="evidence" value="ECO:0007669"/>
    <property type="project" value="UniProtKB-UniRule"/>
</dbReference>
<dbReference type="GO" id="GO:0009089">
    <property type="term" value="P:lysine biosynthetic process via diaminopimelate"/>
    <property type="evidence" value="ECO:0007669"/>
    <property type="project" value="UniProtKB-UniRule"/>
</dbReference>
<dbReference type="CDD" id="cd00610">
    <property type="entry name" value="OAT_like"/>
    <property type="match status" value="1"/>
</dbReference>
<dbReference type="FunFam" id="3.40.640.10:FF:000004">
    <property type="entry name" value="Acetylornithine aminotransferase"/>
    <property type="match status" value="1"/>
</dbReference>
<dbReference type="Gene3D" id="3.90.1150.10">
    <property type="entry name" value="Aspartate Aminotransferase, domain 1"/>
    <property type="match status" value="1"/>
</dbReference>
<dbReference type="Gene3D" id="3.40.640.10">
    <property type="entry name" value="Type I PLP-dependent aspartate aminotransferase-like (Major domain)"/>
    <property type="match status" value="1"/>
</dbReference>
<dbReference type="HAMAP" id="MF_01107">
    <property type="entry name" value="ArgD_aminotrans_3"/>
    <property type="match status" value="1"/>
</dbReference>
<dbReference type="InterPro" id="IPR017652">
    <property type="entry name" value="Ac/SucOrn_transaminase_bac"/>
</dbReference>
<dbReference type="InterPro" id="IPR004636">
    <property type="entry name" value="AcOrn/SuccOrn_fam"/>
</dbReference>
<dbReference type="InterPro" id="IPR005814">
    <property type="entry name" value="Aminotrans_3"/>
</dbReference>
<dbReference type="InterPro" id="IPR049704">
    <property type="entry name" value="Aminotrans_3_PPA_site"/>
</dbReference>
<dbReference type="InterPro" id="IPR050103">
    <property type="entry name" value="Class-III_PLP-dep_AT"/>
</dbReference>
<dbReference type="InterPro" id="IPR015424">
    <property type="entry name" value="PyrdxlP-dep_Trfase"/>
</dbReference>
<dbReference type="InterPro" id="IPR015421">
    <property type="entry name" value="PyrdxlP-dep_Trfase_major"/>
</dbReference>
<dbReference type="InterPro" id="IPR015422">
    <property type="entry name" value="PyrdxlP-dep_Trfase_small"/>
</dbReference>
<dbReference type="NCBIfam" id="TIGR03246">
    <property type="entry name" value="arg_catab_astC"/>
    <property type="match status" value="1"/>
</dbReference>
<dbReference type="NCBIfam" id="TIGR00707">
    <property type="entry name" value="argD"/>
    <property type="match status" value="1"/>
</dbReference>
<dbReference type="NCBIfam" id="NF002325">
    <property type="entry name" value="PRK01278.1"/>
    <property type="match status" value="1"/>
</dbReference>
<dbReference type="NCBIfam" id="NF003468">
    <property type="entry name" value="PRK05093.1"/>
    <property type="match status" value="1"/>
</dbReference>
<dbReference type="NCBIfam" id="NF009047">
    <property type="entry name" value="PRK12381.1"/>
    <property type="match status" value="1"/>
</dbReference>
<dbReference type="PANTHER" id="PTHR11986:SF122">
    <property type="entry name" value="ACETYLORNITHINE_SUCCINYLDIAMINOPIMELATE AMINOTRANSFERASE"/>
    <property type="match status" value="1"/>
</dbReference>
<dbReference type="PANTHER" id="PTHR11986">
    <property type="entry name" value="AMINOTRANSFERASE CLASS III"/>
    <property type="match status" value="1"/>
</dbReference>
<dbReference type="Pfam" id="PF00202">
    <property type="entry name" value="Aminotran_3"/>
    <property type="match status" value="1"/>
</dbReference>
<dbReference type="PIRSF" id="PIRSF000521">
    <property type="entry name" value="Transaminase_4ab_Lys_Orn"/>
    <property type="match status" value="1"/>
</dbReference>
<dbReference type="SUPFAM" id="SSF53383">
    <property type="entry name" value="PLP-dependent transferases"/>
    <property type="match status" value="1"/>
</dbReference>
<dbReference type="PROSITE" id="PS00600">
    <property type="entry name" value="AA_TRANSFER_CLASS_3"/>
    <property type="match status" value="1"/>
</dbReference>